<dbReference type="EMBL" id="AJ298673">
    <property type="protein sequence ID" value="CAC28069.1"/>
    <property type="molecule type" value="Genomic_DNA"/>
</dbReference>
<dbReference type="SMR" id="Q9B6H6"/>
<dbReference type="GO" id="GO:0005743">
    <property type="term" value="C:mitochondrial inner membrane"/>
    <property type="evidence" value="ECO:0007669"/>
    <property type="project" value="UniProtKB-SubCell"/>
</dbReference>
<dbReference type="GO" id="GO:0045259">
    <property type="term" value="C:proton-transporting ATP synthase complex"/>
    <property type="evidence" value="ECO:0000250"/>
    <property type="project" value="UniProtKB"/>
</dbReference>
<dbReference type="GO" id="GO:0015252">
    <property type="term" value="F:proton channel activity"/>
    <property type="evidence" value="ECO:0000250"/>
    <property type="project" value="UniProtKB"/>
</dbReference>
<dbReference type="GO" id="GO:0046933">
    <property type="term" value="F:proton-transporting ATP synthase activity, rotational mechanism"/>
    <property type="evidence" value="ECO:0007669"/>
    <property type="project" value="TreeGrafter"/>
</dbReference>
<dbReference type="GO" id="GO:0015986">
    <property type="term" value="P:proton motive force-driven ATP synthesis"/>
    <property type="evidence" value="ECO:0000250"/>
    <property type="project" value="UniProtKB"/>
</dbReference>
<dbReference type="GO" id="GO:1902600">
    <property type="term" value="P:proton transmembrane transport"/>
    <property type="evidence" value="ECO:0000250"/>
    <property type="project" value="UniProtKB"/>
</dbReference>
<dbReference type="CDD" id="cd00310">
    <property type="entry name" value="ATP-synt_Fo_a_6"/>
    <property type="match status" value="1"/>
</dbReference>
<dbReference type="Gene3D" id="1.20.120.220">
    <property type="entry name" value="ATP synthase, F0 complex, subunit A"/>
    <property type="match status" value="1"/>
</dbReference>
<dbReference type="InterPro" id="IPR000568">
    <property type="entry name" value="ATP_synth_F0_asu"/>
</dbReference>
<dbReference type="InterPro" id="IPR023011">
    <property type="entry name" value="ATP_synth_F0_asu_AS"/>
</dbReference>
<dbReference type="InterPro" id="IPR045083">
    <property type="entry name" value="ATP_synth_F0_asu_bact/mt"/>
</dbReference>
<dbReference type="InterPro" id="IPR035908">
    <property type="entry name" value="F0_ATP_A_sf"/>
</dbReference>
<dbReference type="NCBIfam" id="TIGR01131">
    <property type="entry name" value="ATP_synt_6_or_A"/>
    <property type="match status" value="1"/>
</dbReference>
<dbReference type="PANTHER" id="PTHR11410">
    <property type="entry name" value="ATP SYNTHASE SUBUNIT A"/>
    <property type="match status" value="1"/>
</dbReference>
<dbReference type="PANTHER" id="PTHR11410:SF0">
    <property type="entry name" value="ATP SYNTHASE SUBUNIT A"/>
    <property type="match status" value="1"/>
</dbReference>
<dbReference type="Pfam" id="PF00119">
    <property type="entry name" value="ATP-synt_A"/>
    <property type="match status" value="1"/>
</dbReference>
<dbReference type="PRINTS" id="PR00123">
    <property type="entry name" value="ATPASEA"/>
</dbReference>
<dbReference type="SUPFAM" id="SSF81336">
    <property type="entry name" value="F1F0 ATP synthase subunit A"/>
    <property type="match status" value="1"/>
</dbReference>
<dbReference type="PROSITE" id="PS00449">
    <property type="entry name" value="ATPASE_A"/>
    <property type="match status" value="1"/>
</dbReference>
<organism>
    <name type="scientific">Rhopalosiphum padi</name>
    <name type="common">Bird cherry-oat aphid</name>
    <name type="synonym">Aphis padi</name>
    <dbReference type="NCBI Taxonomy" id="40932"/>
    <lineage>
        <taxon>Eukaryota</taxon>
        <taxon>Metazoa</taxon>
        <taxon>Ecdysozoa</taxon>
        <taxon>Arthropoda</taxon>
        <taxon>Hexapoda</taxon>
        <taxon>Insecta</taxon>
        <taxon>Pterygota</taxon>
        <taxon>Neoptera</taxon>
        <taxon>Paraneoptera</taxon>
        <taxon>Hemiptera</taxon>
        <taxon>Sternorrhyncha</taxon>
        <taxon>Aphidomorpha</taxon>
        <taxon>Aphidoidea</taxon>
        <taxon>Aphididae</taxon>
        <taxon>Aphidini</taxon>
        <taxon>Rhopalosiphum</taxon>
    </lineage>
</organism>
<name>ATP6_RHOPD</name>
<geneLocation type="mitochondrion"/>
<comment type="function">
    <text evidence="1">Subunit a, of the mitochondrial membrane ATP synthase complex (F(1)F(0) ATP synthase or Complex V) that produces ATP from ADP in the presence of a proton gradient across the membrane which is generated by electron transport complexes of the respiratory chain. ATP synthase complex consist of a soluble F(1) head domain - the catalytic core - and a membrane F(1) domain - the membrane proton channel. These two domains are linked by a central stalk rotating inside the F(1) region and a stationary peripheral stalk. During catalysis, ATP synthesis in the catalytic domain of F(1) is coupled via a rotary mechanism of the central stalk subunits to proton translocation. With the subunit c (ATP5MC1), forms the proton-conducting channel in the F(0) domain, that contains two crucial half-channels (inlet and outlet) that facilitate proton movement from the mitochondrial intermembrane space (IMS) into the matrix. Protons are taken up via the inlet half-channel and released through the outlet half-channel, following a Grotthuss mechanism.</text>
</comment>
<comment type="catalytic activity">
    <reaction evidence="1">
        <text>H(+)(in) = H(+)(out)</text>
        <dbReference type="Rhea" id="RHEA:34979"/>
        <dbReference type="ChEBI" id="CHEBI:15378"/>
    </reaction>
</comment>
<comment type="subunit">
    <text evidence="1">Component of the ATP synthase complex composed at least of ATP5F1A/subunit alpha, ATP5F1B/subunit beta, ATP5MC1/subunit c (homooctomer), MT-ATP6/subunit a, MT-ATP8/subunit 8, ATP5ME/subunit e, ATP5MF/subunit f, ATP5MG/subunit g, ATP5MK/subunit k, ATP5MJ/subunit j, ATP5F1C/subunit gamma, ATP5F1D/subunit delta, ATP5F1E/subunit epsilon, ATP5PF/subunit F6, ATP5PB/subunit b, ATP5PD/subunit d, ATP5PO/subunit OSCP. ATP synthase complex consists of a soluble F(1) head domain (subunits alpha(3) and beta(3)) - the catalytic core - and a membrane F(0) domain - the membrane proton channel (subunits c, a, 8, e, f, g, k and j). These two domains are linked by a central stalk (subunits gamma, delta, and epsilon) rotating inside the F1 region and a stationary peripheral stalk (subunits F6, b, d, and OSCP). Interacts with DNAJC30; interaction is direct.</text>
</comment>
<comment type="subcellular location">
    <subcellularLocation>
        <location>Mitochondrion inner membrane</location>
        <topology>Multi-pass membrane protein</topology>
    </subcellularLocation>
</comment>
<comment type="similarity">
    <text evidence="3">Belongs to the ATPase A chain family.</text>
</comment>
<feature type="chain" id="PRO_0000082166" description="ATP synthase F(0) complex subunit a">
    <location>
        <begin position="1"/>
        <end position="217"/>
    </location>
</feature>
<feature type="transmembrane region" description="Helical" evidence="2">
    <location>
        <begin position="20"/>
        <end position="40"/>
    </location>
</feature>
<feature type="transmembrane region" description="Helical" evidence="2">
    <location>
        <begin position="70"/>
        <end position="90"/>
    </location>
</feature>
<feature type="transmembrane region" description="Helical" evidence="2">
    <location>
        <begin position="100"/>
        <end position="120"/>
    </location>
</feature>
<feature type="transmembrane region" description="Helical" evidence="2">
    <location>
        <begin position="126"/>
        <end position="146"/>
    </location>
</feature>
<feature type="transmembrane region" description="Helical" evidence="2">
    <location>
        <begin position="166"/>
        <end position="188"/>
    </location>
</feature>
<feature type="transmembrane region" description="Helical" evidence="2">
    <location>
        <begin position="193"/>
        <end position="215"/>
    </location>
</feature>
<keyword id="KW-0066">ATP synthesis</keyword>
<keyword id="KW-0138">CF(0)</keyword>
<keyword id="KW-0375">Hydrogen ion transport</keyword>
<keyword id="KW-0406">Ion transport</keyword>
<keyword id="KW-0472">Membrane</keyword>
<keyword id="KW-0496">Mitochondrion</keyword>
<keyword id="KW-0999">Mitochondrion inner membrane</keyword>
<keyword id="KW-0812">Transmembrane</keyword>
<keyword id="KW-1133">Transmembrane helix</keyword>
<keyword id="KW-0813">Transport</keyword>
<protein>
    <recommendedName>
        <fullName evidence="1">ATP synthase F(0) complex subunit a</fullName>
    </recommendedName>
    <alternativeName>
        <fullName>F-ATPase protein 6</fullName>
    </alternativeName>
    <alternativeName>
        <fullName evidence="1">Proton-conducting channel, ATP synthase F(0) complex subunit a</fullName>
    </alternativeName>
</protein>
<sequence>MTTNLFNIFDPSTTIFNLEMNWISTLLIILFMPNFLWILPNRMNWLLFKMFNMLNNEMLMLYKMKKTKSPAFLFISLFMFILLNNFFSLFPYIFSSSSHMVFSVTLAIPFWMFFIILSTCKNTKNMIAHLIPLNTPIYLAPLMTIIETMSIIIRPMSLSIRLTANLIAGHLLMTLLNFNSLMIIIIFIQMFMMIFELCVALIQSYVFSILSSLYSSE</sequence>
<accession>Q9B6H6</accession>
<evidence type="ECO:0000250" key="1">
    <source>
        <dbReference type="UniProtKB" id="P00846"/>
    </source>
</evidence>
<evidence type="ECO:0000255" key="2"/>
<evidence type="ECO:0000305" key="3"/>
<proteinExistence type="inferred from homology"/>
<gene>
    <name evidence="1" type="primary">MT-ATP6</name>
    <name type="synonym">ATP6</name>
    <name type="synonym">ATPASE6</name>
    <name type="synonym">MTATP6</name>
</gene>
<reference key="1">
    <citation type="journal article" date="2001" name="Mol. Phylogenet. Evol.">
        <title>Molecular systematics of aphids and their primary endosymbionts.</title>
        <authorList>
            <person name="Martinez-Torres D."/>
            <person name="Buades C."/>
            <person name="Latorre A."/>
            <person name="Moya A."/>
        </authorList>
    </citation>
    <scope>NUCLEOTIDE SEQUENCE [GENOMIC DNA]</scope>
</reference>